<evidence type="ECO:0000255" key="1">
    <source>
        <dbReference type="HAMAP-Rule" id="MF_00365"/>
    </source>
</evidence>
<keyword id="KW-0067">ATP-binding</keyword>
<keyword id="KW-0963">Cytoplasm</keyword>
<keyword id="KW-0227">DNA damage</keyword>
<keyword id="KW-0234">DNA repair</keyword>
<keyword id="KW-0235">DNA replication</keyword>
<keyword id="KW-0238">DNA-binding</keyword>
<keyword id="KW-0547">Nucleotide-binding</keyword>
<keyword id="KW-1185">Reference proteome</keyword>
<keyword id="KW-0742">SOS response</keyword>
<accession>B9M7S3</accession>
<gene>
    <name evidence="1" type="primary">recF</name>
    <name type="ordered locus">Geob_0003</name>
</gene>
<name>RECF_GEODF</name>
<proteinExistence type="inferred from homology"/>
<comment type="function">
    <text evidence="1">The RecF protein is involved in DNA metabolism; it is required for DNA replication and normal SOS inducibility. RecF binds preferentially to single-stranded, linear DNA. It also seems to bind ATP.</text>
</comment>
<comment type="subcellular location">
    <subcellularLocation>
        <location evidence="1">Cytoplasm</location>
    </subcellularLocation>
</comment>
<comment type="similarity">
    <text evidence="1">Belongs to the RecF family.</text>
</comment>
<feature type="chain" id="PRO_1000133689" description="DNA replication and repair protein RecF">
    <location>
        <begin position="1"/>
        <end position="364"/>
    </location>
</feature>
<feature type="binding site" evidence="1">
    <location>
        <begin position="30"/>
        <end position="37"/>
    </location>
    <ligand>
        <name>ATP</name>
        <dbReference type="ChEBI" id="CHEBI:30616"/>
    </ligand>
</feature>
<organism>
    <name type="scientific">Geotalea daltonii (strain DSM 22248 / JCM 15807 / FRC-32)</name>
    <name type="common">Geobacter daltonii</name>
    <dbReference type="NCBI Taxonomy" id="316067"/>
    <lineage>
        <taxon>Bacteria</taxon>
        <taxon>Pseudomonadati</taxon>
        <taxon>Thermodesulfobacteriota</taxon>
        <taxon>Desulfuromonadia</taxon>
        <taxon>Geobacterales</taxon>
        <taxon>Geobacteraceae</taxon>
        <taxon>Geotalea</taxon>
    </lineage>
</organism>
<sequence length="364" mass="42252">MKLNKIYLQSFRNLQETMLMPAQHFNIFYGNNGQGKTNLLESIFIMATMKSFKTARSSDLVRWGAISSLLKGWVERDGVTREIAVFLDNQGKKIRVDQKAVTRIDDFFGHLNVVVFTPEEVNMVKGLPELRRKYLDRAVFSSDITYLSVYHAYSKILKNRNMLLKRGEKASFDIWTEKLVEQGKNIILSRLAYLDALRDLLKRFYREISGNEEAVDISYRPYHMDLADCRGDVADAFAEALAKTATEEERRGTTLAGPHRDDVEFILNGRPLKQFGSQGQQKSYVLALKMAETEYLQKKFHSQPIFLLDDLSSELDQERKKNLMEFLKKRDMQVFITTTSLQNINVDEIENYRTYRIEEGKVLH</sequence>
<protein>
    <recommendedName>
        <fullName evidence="1">DNA replication and repair protein RecF</fullName>
    </recommendedName>
</protein>
<reference key="1">
    <citation type="submission" date="2009-01" db="EMBL/GenBank/DDBJ databases">
        <title>Complete sequence of Geobacter sp. FRC-32.</title>
        <authorList>
            <consortium name="US DOE Joint Genome Institute"/>
            <person name="Lucas S."/>
            <person name="Copeland A."/>
            <person name="Lapidus A."/>
            <person name="Glavina del Rio T."/>
            <person name="Dalin E."/>
            <person name="Tice H."/>
            <person name="Bruce D."/>
            <person name="Goodwin L."/>
            <person name="Pitluck S."/>
            <person name="Saunders E."/>
            <person name="Brettin T."/>
            <person name="Detter J.C."/>
            <person name="Han C."/>
            <person name="Larimer F."/>
            <person name="Land M."/>
            <person name="Hauser L."/>
            <person name="Kyrpides N."/>
            <person name="Ovchinnikova G."/>
            <person name="Kostka J."/>
            <person name="Richardson P."/>
        </authorList>
    </citation>
    <scope>NUCLEOTIDE SEQUENCE [LARGE SCALE GENOMIC DNA]</scope>
    <source>
        <strain>DSM 22248 / JCM 15807 / FRC-32</strain>
    </source>
</reference>
<dbReference type="EMBL" id="CP001390">
    <property type="protein sequence ID" value="ACM18381.1"/>
    <property type="molecule type" value="Genomic_DNA"/>
</dbReference>
<dbReference type="RefSeq" id="WP_012645110.1">
    <property type="nucleotide sequence ID" value="NC_011979.1"/>
</dbReference>
<dbReference type="SMR" id="B9M7S3"/>
<dbReference type="STRING" id="316067.Geob_0003"/>
<dbReference type="KEGG" id="geo:Geob_0003"/>
<dbReference type="eggNOG" id="COG1195">
    <property type="taxonomic scope" value="Bacteria"/>
</dbReference>
<dbReference type="HOGENOM" id="CLU_040267_0_1_7"/>
<dbReference type="OrthoDB" id="9803889at2"/>
<dbReference type="Proteomes" id="UP000007721">
    <property type="component" value="Chromosome"/>
</dbReference>
<dbReference type="GO" id="GO:0005737">
    <property type="term" value="C:cytoplasm"/>
    <property type="evidence" value="ECO:0007669"/>
    <property type="project" value="UniProtKB-SubCell"/>
</dbReference>
<dbReference type="GO" id="GO:0005524">
    <property type="term" value="F:ATP binding"/>
    <property type="evidence" value="ECO:0007669"/>
    <property type="project" value="UniProtKB-UniRule"/>
</dbReference>
<dbReference type="GO" id="GO:0003697">
    <property type="term" value="F:single-stranded DNA binding"/>
    <property type="evidence" value="ECO:0007669"/>
    <property type="project" value="UniProtKB-UniRule"/>
</dbReference>
<dbReference type="GO" id="GO:0006260">
    <property type="term" value="P:DNA replication"/>
    <property type="evidence" value="ECO:0007669"/>
    <property type="project" value="UniProtKB-UniRule"/>
</dbReference>
<dbReference type="GO" id="GO:0000731">
    <property type="term" value="P:DNA synthesis involved in DNA repair"/>
    <property type="evidence" value="ECO:0007669"/>
    <property type="project" value="TreeGrafter"/>
</dbReference>
<dbReference type="GO" id="GO:0006302">
    <property type="term" value="P:double-strand break repair"/>
    <property type="evidence" value="ECO:0007669"/>
    <property type="project" value="TreeGrafter"/>
</dbReference>
<dbReference type="GO" id="GO:0009432">
    <property type="term" value="P:SOS response"/>
    <property type="evidence" value="ECO:0007669"/>
    <property type="project" value="UniProtKB-UniRule"/>
</dbReference>
<dbReference type="Gene3D" id="3.40.50.300">
    <property type="entry name" value="P-loop containing nucleotide triphosphate hydrolases"/>
    <property type="match status" value="1"/>
</dbReference>
<dbReference type="Gene3D" id="1.20.1050.90">
    <property type="entry name" value="RecF/RecN/SMC, N-terminal domain"/>
    <property type="match status" value="1"/>
</dbReference>
<dbReference type="HAMAP" id="MF_00365">
    <property type="entry name" value="RecF"/>
    <property type="match status" value="1"/>
</dbReference>
<dbReference type="InterPro" id="IPR001238">
    <property type="entry name" value="DNA-binding_RecF"/>
</dbReference>
<dbReference type="InterPro" id="IPR018078">
    <property type="entry name" value="DNA-binding_RecF_CS"/>
</dbReference>
<dbReference type="InterPro" id="IPR027417">
    <property type="entry name" value="P-loop_NTPase"/>
</dbReference>
<dbReference type="InterPro" id="IPR003395">
    <property type="entry name" value="RecF/RecN/SMC_N"/>
</dbReference>
<dbReference type="InterPro" id="IPR042174">
    <property type="entry name" value="RecF_2"/>
</dbReference>
<dbReference type="NCBIfam" id="TIGR00611">
    <property type="entry name" value="recf"/>
    <property type="match status" value="1"/>
</dbReference>
<dbReference type="PANTHER" id="PTHR32182">
    <property type="entry name" value="DNA REPLICATION AND REPAIR PROTEIN RECF"/>
    <property type="match status" value="1"/>
</dbReference>
<dbReference type="PANTHER" id="PTHR32182:SF0">
    <property type="entry name" value="DNA REPLICATION AND REPAIR PROTEIN RECF"/>
    <property type="match status" value="1"/>
</dbReference>
<dbReference type="Pfam" id="PF02463">
    <property type="entry name" value="SMC_N"/>
    <property type="match status" value="1"/>
</dbReference>
<dbReference type="SUPFAM" id="SSF52540">
    <property type="entry name" value="P-loop containing nucleoside triphosphate hydrolases"/>
    <property type="match status" value="1"/>
</dbReference>
<dbReference type="PROSITE" id="PS00618">
    <property type="entry name" value="RECF_2"/>
    <property type="match status" value="1"/>
</dbReference>